<proteinExistence type="inferred from homology"/>
<name>CYSA_BACCR</name>
<protein>
    <recommendedName>
        <fullName evidence="1">Sulfate/thiosulfate import ATP-binding protein CysA</fullName>
        <ecNumber evidence="1">7.3.2.3</ecNumber>
    </recommendedName>
    <alternativeName>
        <fullName evidence="1">Sulfate-transporting ATPase</fullName>
    </alternativeName>
</protein>
<organism>
    <name type="scientific">Bacillus cereus (strain ATCC 14579 / DSM 31 / CCUG 7414 / JCM 2152 / NBRC 15305 / NCIMB 9373 / NCTC 2599 / NRRL B-3711)</name>
    <dbReference type="NCBI Taxonomy" id="226900"/>
    <lineage>
        <taxon>Bacteria</taxon>
        <taxon>Bacillati</taxon>
        <taxon>Bacillota</taxon>
        <taxon>Bacilli</taxon>
        <taxon>Bacillales</taxon>
        <taxon>Bacillaceae</taxon>
        <taxon>Bacillus</taxon>
        <taxon>Bacillus cereus group</taxon>
    </lineage>
</organism>
<accession>Q81GU1</accession>
<evidence type="ECO:0000255" key="1">
    <source>
        <dbReference type="HAMAP-Rule" id="MF_01701"/>
    </source>
</evidence>
<keyword id="KW-0067">ATP-binding</keyword>
<keyword id="KW-1003">Cell membrane</keyword>
<keyword id="KW-0472">Membrane</keyword>
<keyword id="KW-0547">Nucleotide-binding</keyword>
<keyword id="KW-1185">Reference proteome</keyword>
<keyword id="KW-0764">Sulfate transport</keyword>
<keyword id="KW-1278">Translocase</keyword>
<keyword id="KW-0813">Transport</keyword>
<gene>
    <name evidence="1" type="primary">cysA</name>
    <name type="ordered locus">BC_1094</name>
</gene>
<dbReference type="EC" id="7.3.2.3" evidence="1"/>
<dbReference type="EMBL" id="AE016877">
    <property type="protein sequence ID" value="AAP08081.1"/>
    <property type="molecule type" value="Genomic_DNA"/>
</dbReference>
<dbReference type="RefSeq" id="NP_830880.1">
    <property type="nucleotide sequence ID" value="NC_004722.1"/>
</dbReference>
<dbReference type="RefSeq" id="WP_000027092.1">
    <property type="nucleotide sequence ID" value="NC_004722.1"/>
</dbReference>
<dbReference type="SMR" id="Q81GU1"/>
<dbReference type="STRING" id="226900.BC_1094"/>
<dbReference type="KEGG" id="bce:BC1094"/>
<dbReference type="PATRIC" id="fig|226900.8.peg.1052"/>
<dbReference type="HOGENOM" id="CLU_000604_1_1_9"/>
<dbReference type="OrthoDB" id="9802264at2"/>
<dbReference type="Proteomes" id="UP000001417">
    <property type="component" value="Chromosome"/>
</dbReference>
<dbReference type="GO" id="GO:0043190">
    <property type="term" value="C:ATP-binding cassette (ABC) transporter complex"/>
    <property type="evidence" value="ECO:0007669"/>
    <property type="project" value="InterPro"/>
</dbReference>
<dbReference type="GO" id="GO:0015419">
    <property type="term" value="F:ABC-type sulfate transporter activity"/>
    <property type="evidence" value="ECO:0007669"/>
    <property type="project" value="InterPro"/>
</dbReference>
<dbReference type="GO" id="GO:0102025">
    <property type="term" value="F:ABC-type thiosulfate transporter activity"/>
    <property type="evidence" value="ECO:0007669"/>
    <property type="project" value="RHEA"/>
</dbReference>
<dbReference type="GO" id="GO:0005524">
    <property type="term" value="F:ATP binding"/>
    <property type="evidence" value="ECO:0007669"/>
    <property type="project" value="UniProtKB-KW"/>
</dbReference>
<dbReference type="GO" id="GO:0016887">
    <property type="term" value="F:ATP hydrolysis activity"/>
    <property type="evidence" value="ECO:0007669"/>
    <property type="project" value="InterPro"/>
</dbReference>
<dbReference type="GO" id="GO:1902358">
    <property type="term" value="P:sulfate transmembrane transport"/>
    <property type="evidence" value="ECO:0000318"/>
    <property type="project" value="GO_Central"/>
</dbReference>
<dbReference type="CDD" id="cd03296">
    <property type="entry name" value="ABC_CysA_sulfate_importer"/>
    <property type="match status" value="1"/>
</dbReference>
<dbReference type="FunFam" id="3.40.50.300:FF:000227">
    <property type="entry name" value="Sulfate/thiosulfate import ATP-binding protein CysA"/>
    <property type="match status" value="1"/>
</dbReference>
<dbReference type="Gene3D" id="3.40.50.300">
    <property type="entry name" value="P-loop containing nucleotide triphosphate hydrolases"/>
    <property type="match status" value="1"/>
</dbReference>
<dbReference type="InterPro" id="IPR003593">
    <property type="entry name" value="AAA+_ATPase"/>
</dbReference>
<dbReference type="InterPro" id="IPR050093">
    <property type="entry name" value="ABC_SmlMolc_Importer"/>
</dbReference>
<dbReference type="InterPro" id="IPR003439">
    <property type="entry name" value="ABC_transporter-like_ATP-bd"/>
</dbReference>
<dbReference type="InterPro" id="IPR017871">
    <property type="entry name" value="ABC_transporter-like_CS"/>
</dbReference>
<dbReference type="InterPro" id="IPR041193">
    <property type="entry name" value="CysA_C"/>
</dbReference>
<dbReference type="InterPro" id="IPR008995">
    <property type="entry name" value="Mo/tungstate-bd_C_term_dom"/>
</dbReference>
<dbReference type="InterPro" id="IPR027417">
    <property type="entry name" value="P-loop_NTPase"/>
</dbReference>
<dbReference type="InterPro" id="IPR005666">
    <property type="entry name" value="Sulph_transpt1"/>
</dbReference>
<dbReference type="InterPro" id="IPR024765">
    <property type="entry name" value="TOBE-like"/>
</dbReference>
<dbReference type="NCBIfam" id="TIGR00968">
    <property type="entry name" value="3a0106s01"/>
    <property type="match status" value="1"/>
</dbReference>
<dbReference type="PANTHER" id="PTHR42781">
    <property type="entry name" value="SPERMIDINE/PUTRESCINE IMPORT ATP-BINDING PROTEIN POTA"/>
    <property type="match status" value="1"/>
</dbReference>
<dbReference type="PANTHER" id="PTHR42781:SF4">
    <property type="entry name" value="SPERMIDINE_PUTRESCINE IMPORT ATP-BINDING PROTEIN POTA"/>
    <property type="match status" value="1"/>
</dbReference>
<dbReference type="Pfam" id="PF00005">
    <property type="entry name" value="ABC_tran"/>
    <property type="match status" value="1"/>
</dbReference>
<dbReference type="Pfam" id="PF17850">
    <property type="entry name" value="CysA_C_terminal"/>
    <property type="match status" value="1"/>
</dbReference>
<dbReference type="Pfam" id="PF12857">
    <property type="entry name" value="TOBE_3"/>
    <property type="match status" value="1"/>
</dbReference>
<dbReference type="SMART" id="SM00382">
    <property type="entry name" value="AAA"/>
    <property type="match status" value="1"/>
</dbReference>
<dbReference type="SUPFAM" id="SSF50331">
    <property type="entry name" value="MOP-like"/>
    <property type="match status" value="1"/>
</dbReference>
<dbReference type="SUPFAM" id="SSF52540">
    <property type="entry name" value="P-loop containing nucleoside triphosphate hydrolases"/>
    <property type="match status" value="1"/>
</dbReference>
<dbReference type="PROSITE" id="PS00211">
    <property type="entry name" value="ABC_TRANSPORTER_1"/>
    <property type="match status" value="1"/>
</dbReference>
<dbReference type="PROSITE" id="PS50893">
    <property type="entry name" value="ABC_TRANSPORTER_2"/>
    <property type="match status" value="1"/>
</dbReference>
<dbReference type="PROSITE" id="PS51237">
    <property type="entry name" value="CYSA"/>
    <property type="match status" value="1"/>
</dbReference>
<sequence length="357" mass="39974">MSIQIQGVSKQYGTFQALTDIHLDIPKGELVALLGPSGSGKTTLLRIIAGLEEADGGSISFDGEDLTDIHVKNRQVGFVFQHYALFKHMNVFENVAFGLKVRKKSLRPSAEAIEEKVTELLKLVKMDGFAKRYPAQLSGGQRQRIALARALAVEPKILLLDEPFGALDAKVRKELRRWLRKLHDEFQITSVFVTHDQEEALDVADRIVVMNEGCIEQMGTPEEVYENPASPFVYDFLGNVNLFHGRVHKGKLNVGSVELEAPEHKHVSNVDGIAYVRPHDLSISHTKQSIDAIPAKVSYSHAVGNIVYVELKRDGTDEYLEAEITKEQFKQLNIQAGDFVYVQPKEVKVFIPEDFVI</sequence>
<feature type="chain" id="PRO_0000092251" description="Sulfate/thiosulfate import ATP-binding protein CysA">
    <location>
        <begin position="1"/>
        <end position="357"/>
    </location>
</feature>
<feature type="domain" description="ABC transporter" evidence="1">
    <location>
        <begin position="3"/>
        <end position="237"/>
    </location>
</feature>
<feature type="binding site" evidence="1">
    <location>
        <begin position="35"/>
        <end position="42"/>
    </location>
    <ligand>
        <name>ATP</name>
        <dbReference type="ChEBI" id="CHEBI:30616"/>
    </ligand>
</feature>
<comment type="function">
    <text evidence="1">Part of the ABC transporter complex CysAWTP involved in sulfate/thiosulfate import. Responsible for energy coupling to the transport system.</text>
</comment>
<comment type="catalytic activity">
    <reaction evidence="1">
        <text>sulfate(out) + ATP + H2O = sulfate(in) + ADP + phosphate + H(+)</text>
        <dbReference type="Rhea" id="RHEA:10192"/>
        <dbReference type="ChEBI" id="CHEBI:15377"/>
        <dbReference type="ChEBI" id="CHEBI:15378"/>
        <dbReference type="ChEBI" id="CHEBI:16189"/>
        <dbReference type="ChEBI" id="CHEBI:30616"/>
        <dbReference type="ChEBI" id="CHEBI:43474"/>
        <dbReference type="ChEBI" id="CHEBI:456216"/>
        <dbReference type="EC" id="7.3.2.3"/>
    </reaction>
</comment>
<comment type="catalytic activity">
    <reaction evidence="1">
        <text>thiosulfate(out) + ATP + H2O = thiosulfate(in) + ADP + phosphate + H(+)</text>
        <dbReference type="Rhea" id="RHEA:29871"/>
        <dbReference type="ChEBI" id="CHEBI:15377"/>
        <dbReference type="ChEBI" id="CHEBI:15378"/>
        <dbReference type="ChEBI" id="CHEBI:30616"/>
        <dbReference type="ChEBI" id="CHEBI:33542"/>
        <dbReference type="ChEBI" id="CHEBI:43474"/>
        <dbReference type="ChEBI" id="CHEBI:456216"/>
        <dbReference type="EC" id="7.3.2.3"/>
    </reaction>
</comment>
<comment type="subunit">
    <text evidence="1">The complex is composed of two ATP-binding proteins (CysA), two transmembrane proteins (CysT and CysW) and a solute-binding protein (CysP).</text>
</comment>
<comment type="subcellular location">
    <subcellularLocation>
        <location evidence="1">Cell membrane</location>
        <topology evidence="1">Peripheral membrane protein</topology>
    </subcellularLocation>
</comment>
<comment type="similarity">
    <text evidence="1">Belongs to the ABC transporter superfamily. Sulfate/tungstate importer (TC 3.A.1.6) family.</text>
</comment>
<reference key="1">
    <citation type="journal article" date="2003" name="Nature">
        <title>Genome sequence of Bacillus cereus and comparative analysis with Bacillus anthracis.</title>
        <authorList>
            <person name="Ivanova N."/>
            <person name="Sorokin A."/>
            <person name="Anderson I."/>
            <person name="Galleron N."/>
            <person name="Candelon B."/>
            <person name="Kapatral V."/>
            <person name="Bhattacharyya A."/>
            <person name="Reznik G."/>
            <person name="Mikhailova N."/>
            <person name="Lapidus A."/>
            <person name="Chu L."/>
            <person name="Mazur M."/>
            <person name="Goltsman E."/>
            <person name="Larsen N."/>
            <person name="D'Souza M."/>
            <person name="Walunas T."/>
            <person name="Grechkin Y."/>
            <person name="Pusch G."/>
            <person name="Haselkorn R."/>
            <person name="Fonstein M."/>
            <person name="Ehrlich S.D."/>
            <person name="Overbeek R."/>
            <person name="Kyrpides N.C."/>
        </authorList>
    </citation>
    <scope>NUCLEOTIDE SEQUENCE [LARGE SCALE GENOMIC DNA]</scope>
    <source>
        <strain>ATCC 14579 / DSM 31 / CCUG 7414 / JCM 2152 / NBRC 15305 / NCIMB 9373 / NCTC 2599 / NRRL B-3711</strain>
    </source>
</reference>